<comment type="function">
    <text evidence="10">Metalloprotease which, together with cadherin cdh-3 and hemicentin him-4, plays a role in anchor cell (AC) invasion during postembryonic vulval development probably by promoting the degradation of the basement membrane separating the gonad from the vulva epithelium.</text>
</comment>
<comment type="cofactor">
    <cofactor evidence="1">
        <name>Zn(2+)</name>
        <dbReference type="ChEBI" id="CHEBI:29105"/>
    </cofactor>
</comment>
<comment type="subcellular location">
    <subcellularLocation>
        <location evidence="10">Cell membrane</location>
        <topology evidence="14">Single-pass type I membrane protein</topology>
    </subcellularLocation>
    <subcellularLocation>
        <location evidence="10">Basolateral cell membrane</location>
    </subcellularLocation>
    <text evidence="10">Localizes to puncta on the cell surface that are often concentrated at the invasive basolateral membrane of the anchor cell.</text>
</comment>
<comment type="tissue specificity">
    <text evidence="9 10 11">Expressed in the anchor cell (PubMed:11060231, PubMed:15960981). Expressed in the anchor cell throughout the L3 and the early L4 stage, but not in vulva precursor cells P6.p, P6.px, or P6.pxx (PubMed:11060231). Expression in P6.pxxx cells begins in late-L4 stage. During L4 lethargus, expressed in all four vulE cells, but not in vulF cells (PubMed:11060231). The expression in vulE cells persists in adulthood (PubMed:11060231). In males, expressed in the linker cell (LC) from the early L4 stage until LC death during the L4-to-adult molt (PubMed:19906858).</text>
</comment>
<comment type="domain">
    <text evidence="2">The conserved cysteine present in the cysteine-switch motif binds the catalytic zinc ion, thus inhibiting the enzyme. The dissociation of the cysteine from the zinc ion upon the activation-peptide release activates the enzyme.</text>
</comment>
<comment type="disruption phenotype">
    <text evidence="10">No defect in anchor cell invasion. In 7 percent of cdh-3 and zmp-1 double mutants and in 25 percent of cdh-3, him-4 and zmp-1 triple mutants, anchor cell invasion is delayed.</text>
</comment>
<comment type="miscellaneous">
    <text evidence="12">Displays very low catalytic activity compared to zmp-2 towards synthetic substrate Mca-Pro-Leu-Gly-Leu-Gly-Leu-Dpa-Ala-Arg-NH2 in vitro.</text>
</comment>
<comment type="similarity">
    <text evidence="5">Belongs to the peptidase M10A family.</text>
</comment>
<name>MMPA_CAEEL</name>
<feature type="signal peptide" evidence="5">
    <location>
        <begin position="1"/>
        <end position="21"/>
    </location>
</feature>
<feature type="propeptide" id="PRO_0000439231" description="Activation peptide" evidence="4">
    <location>
        <begin position="22"/>
        <end position="95"/>
    </location>
</feature>
<feature type="chain" id="PRO_5007661160" description="Matrix metalloproteinase-A" evidence="14">
    <location>
        <begin position="96"/>
        <end position="521"/>
    </location>
</feature>
<feature type="topological domain" description="Extracellular" evidence="14">
    <location>
        <begin position="96"/>
        <end position="500"/>
    </location>
</feature>
<feature type="transmembrane region" description="Helical" evidence="5">
    <location>
        <begin position="501"/>
        <end position="521"/>
    </location>
</feature>
<feature type="repeat" description="Hemopexin 1" evidence="7">
    <location>
        <begin position="300"/>
        <end position="347"/>
    </location>
</feature>
<feature type="repeat" description="Hemopexin 2" evidence="7">
    <location>
        <begin position="391"/>
        <end position="443"/>
    </location>
</feature>
<feature type="repeat" description="Hemopexin 3" evidence="7">
    <location>
        <begin position="444"/>
        <end position="492"/>
    </location>
</feature>
<feature type="region of interest" description="Disordered" evidence="8">
    <location>
        <begin position="259"/>
        <end position="298"/>
    </location>
</feature>
<feature type="short sequence motif" description="Cysteine switch" evidence="2">
    <location>
        <begin position="78"/>
        <end position="85"/>
    </location>
</feature>
<feature type="compositionally biased region" description="Basic and acidic residues" evidence="8">
    <location>
        <begin position="261"/>
        <end position="298"/>
    </location>
</feature>
<feature type="active site" evidence="3">
    <location>
        <position position="216"/>
    </location>
</feature>
<feature type="binding site" description="in inhibited form" evidence="2">
    <location>
        <position position="80"/>
    </location>
    <ligand>
        <name>Zn(2+)</name>
        <dbReference type="ChEBI" id="CHEBI:29105"/>
        <note>catalytic</note>
    </ligand>
</feature>
<feature type="binding site" evidence="2">
    <location>
        <position position="215"/>
    </location>
    <ligand>
        <name>Zn(2+)</name>
        <dbReference type="ChEBI" id="CHEBI:29105"/>
        <note>catalytic</note>
    </ligand>
</feature>
<feature type="binding site" evidence="2">
    <location>
        <position position="219"/>
    </location>
    <ligand>
        <name>Zn(2+)</name>
        <dbReference type="ChEBI" id="CHEBI:29105"/>
        <note>catalytic</note>
    </ligand>
</feature>
<feature type="binding site" evidence="2">
    <location>
        <position position="225"/>
    </location>
    <ligand>
        <name>Zn(2+)</name>
        <dbReference type="ChEBI" id="CHEBI:29105"/>
        <note>catalytic</note>
    </ligand>
</feature>
<feature type="glycosylation site" description="N-linked (GlcNAc...) asparagine" evidence="6">
    <location>
        <position position="199"/>
    </location>
</feature>
<feature type="glycosylation site" description="N-linked (GlcNAc...) asparagine" evidence="6">
    <location>
        <position position="469"/>
    </location>
</feature>
<dbReference type="EC" id="3.4.24.-" evidence="12"/>
<dbReference type="EMBL" id="AB007817">
    <property type="protein sequence ID" value="BAA28353.1"/>
    <property type="molecule type" value="mRNA"/>
</dbReference>
<dbReference type="EMBL" id="BX284603">
    <property type="protein sequence ID" value="CCD65979.1"/>
    <property type="molecule type" value="Genomic_DNA"/>
</dbReference>
<dbReference type="PIR" id="T37252">
    <property type="entry name" value="T37252"/>
</dbReference>
<dbReference type="RefSeq" id="NP_741156.1">
    <property type="nucleotide sequence ID" value="NM_171138.3"/>
</dbReference>
<dbReference type="SMR" id="G5EGM1"/>
<dbReference type="FunCoup" id="G5EGM1">
    <property type="interactions" value="88"/>
</dbReference>
<dbReference type="STRING" id="6239.EGAP1.3.1"/>
<dbReference type="MEROPS" id="M10.067"/>
<dbReference type="GlyCosmos" id="G5EGM1">
    <property type="glycosylation" value="2 sites, No reported glycans"/>
</dbReference>
<dbReference type="PaxDb" id="6239-EGAP1.3"/>
<dbReference type="PeptideAtlas" id="G5EGM1"/>
<dbReference type="EnsemblMetazoa" id="EGAP1.3.1">
    <property type="protein sequence ID" value="EGAP1.3.1"/>
    <property type="gene ID" value="WBGene00006987"/>
</dbReference>
<dbReference type="GeneID" id="175839"/>
<dbReference type="KEGG" id="cel:CELE_EGAP1.3"/>
<dbReference type="AGR" id="WB:WBGene00006987"/>
<dbReference type="CTD" id="175839"/>
<dbReference type="WormBase" id="EGAP1.3">
    <property type="protein sequence ID" value="CE30930"/>
    <property type="gene ID" value="WBGene00006987"/>
    <property type="gene designation" value="zmp-1"/>
</dbReference>
<dbReference type="eggNOG" id="KOG1565">
    <property type="taxonomic scope" value="Eukaryota"/>
</dbReference>
<dbReference type="GeneTree" id="ENSGT00940000166111"/>
<dbReference type="HOGENOM" id="CLU_015489_6_0_1"/>
<dbReference type="InParanoid" id="G5EGM1"/>
<dbReference type="OMA" id="DPRYPQD"/>
<dbReference type="OrthoDB" id="406838at2759"/>
<dbReference type="PhylomeDB" id="G5EGM1"/>
<dbReference type="Reactome" id="R-CEL-1442490">
    <property type="pathway name" value="Collagen degradation"/>
</dbReference>
<dbReference type="Reactome" id="R-CEL-1474228">
    <property type="pathway name" value="Degradation of the extracellular matrix"/>
</dbReference>
<dbReference type="Reactome" id="R-CEL-1592389">
    <property type="pathway name" value="Activation of Matrix Metalloproteinases"/>
</dbReference>
<dbReference type="Reactome" id="R-CEL-210991">
    <property type="pathway name" value="Basigin interactions"/>
</dbReference>
<dbReference type="Reactome" id="R-CEL-2168880">
    <property type="pathway name" value="Scavenging of heme from plasma"/>
</dbReference>
<dbReference type="Reactome" id="R-CEL-2179392">
    <property type="pathway name" value="EGFR Transactivation by Gastrin"/>
</dbReference>
<dbReference type="Reactome" id="R-CEL-3928665">
    <property type="pathway name" value="EPH-ephrin mediated repulsion of cells"/>
</dbReference>
<dbReference type="Reactome" id="R-CEL-6798695">
    <property type="pathway name" value="Neutrophil degranulation"/>
</dbReference>
<dbReference type="PRO" id="PR:G5EGM1"/>
<dbReference type="Proteomes" id="UP000001940">
    <property type="component" value="Chromosome III"/>
</dbReference>
<dbReference type="Bgee" id="WBGene00006987">
    <property type="expression patterns" value="Expressed in embryo and 3 other cell types or tissues"/>
</dbReference>
<dbReference type="GO" id="GO:0016323">
    <property type="term" value="C:basolateral plasma membrane"/>
    <property type="evidence" value="ECO:0007669"/>
    <property type="project" value="UniProtKB-SubCell"/>
</dbReference>
<dbReference type="GO" id="GO:0009986">
    <property type="term" value="C:cell surface"/>
    <property type="evidence" value="ECO:0000314"/>
    <property type="project" value="WormBase"/>
</dbReference>
<dbReference type="GO" id="GO:0031012">
    <property type="term" value="C:extracellular matrix"/>
    <property type="evidence" value="ECO:0007669"/>
    <property type="project" value="InterPro"/>
</dbReference>
<dbReference type="GO" id="GO:0004222">
    <property type="term" value="F:metalloendopeptidase activity"/>
    <property type="evidence" value="ECO:0007669"/>
    <property type="project" value="InterPro"/>
</dbReference>
<dbReference type="GO" id="GO:0008237">
    <property type="term" value="F:metallopeptidase activity"/>
    <property type="evidence" value="ECO:0000315"/>
    <property type="project" value="UniProtKB"/>
</dbReference>
<dbReference type="GO" id="GO:0008270">
    <property type="term" value="F:zinc ion binding"/>
    <property type="evidence" value="ECO:0007669"/>
    <property type="project" value="InterPro"/>
</dbReference>
<dbReference type="GO" id="GO:0034769">
    <property type="term" value="P:basement membrane disassembly"/>
    <property type="evidence" value="ECO:0000316"/>
    <property type="project" value="UniProtKB"/>
</dbReference>
<dbReference type="GO" id="GO:0006508">
    <property type="term" value="P:proteolysis"/>
    <property type="evidence" value="ECO:0007669"/>
    <property type="project" value="UniProtKB-KW"/>
</dbReference>
<dbReference type="CDD" id="cd00094">
    <property type="entry name" value="HX"/>
    <property type="match status" value="1"/>
</dbReference>
<dbReference type="CDD" id="cd04278">
    <property type="entry name" value="ZnMc_MMP"/>
    <property type="match status" value="1"/>
</dbReference>
<dbReference type="FunFam" id="3.40.390.10:FF:000081">
    <property type="entry name" value="Serpentine receptor class gamma"/>
    <property type="match status" value="1"/>
</dbReference>
<dbReference type="Gene3D" id="3.40.390.10">
    <property type="entry name" value="Collagenase (Catalytic Domain)"/>
    <property type="match status" value="1"/>
</dbReference>
<dbReference type="Gene3D" id="2.110.10.10">
    <property type="entry name" value="Hemopexin-like domain"/>
    <property type="match status" value="1"/>
</dbReference>
<dbReference type="InterPro" id="IPR000585">
    <property type="entry name" value="Hemopexin-like_dom"/>
</dbReference>
<dbReference type="InterPro" id="IPR036375">
    <property type="entry name" value="Hemopexin-like_dom_sf"/>
</dbReference>
<dbReference type="InterPro" id="IPR018487">
    <property type="entry name" value="Hemopexin-like_repeat"/>
</dbReference>
<dbReference type="InterPro" id="IPR033739">
    <property type="entry name" value="M10A_MMP"/>
</dbReference>
<dbReference type="InterPro" id="IPR024079">
    <property type="entry name" value="MetalloPept_cat_dom_sf"/>
</dbReference>
<dbReference type="InterPro" id="IPR001818">
    <property type="entry name" value="Pept_M10_metallopeptidase"/>
</dbReference>
<dbReference type="InterPro" id="IPR021190">
    <property type="entry name" value="Pept_M10A"/>
</dbReference>
<dbReference type="InterPro" id="IPR021158">
    <property type="entry name" value="Pept_M10A_Zn_BS"/>
</dbReference>
<dbReference type="InterPro" id="IPR006026">
    <property type="entry name" value="Peptidase_Metallo"/>
</dbReference>
<dbReference type="InterPro" id="IPR002477">
    <property type="entry name" value="Peptidoglycan-bd-like"/>
</dbReference>
<dbReference type="InterPro" id="IPR036365">
    <property type="entry name" value="PGBD-like_sf"/>
</dbReference>
<dbReference type="PANTHER" id="PTHR10201">
    <property type="entry name" value="MATRIX METALLOPROTEINASE"/>
    <property type="match status" value="1"/>
</dbReference>
<dbReference type="PANTHER" id="PTHR10201:SF291">
    <property type="entry name" value="MATRIX METALLOPROTEINASE 1, ISOFORM C-RELATED"/>
    <property type="match status" value="1"/>
</dbReference>
<dbReference type="Pfam" id="PF00413">
    <property type="entry name" value="Peptidase_M10"/>
    <property type="match status" value="1"/>
</dbReference>
<dbReference type="Pfam" id="PF01471">
    <property type="entry name" value="PG_binding_1"/>
    <property type="match status" value="1"/>
</dbReference>
<dbReference type="PIRSF" id="PIRSF001191">
    <property type="entry name" value="Peptidase_M10A_matrix"/>
    <property type="match status" value="1"/>
</dbReference>
<dbReference type="PRINTS" id="PR00138">
    <property type="entry name" value="MATRIXIN"/>
</dbReference>
<dbReference type="SMART" id="SM00120">
    <property type="entry name" value="HX"/>
    <property type="match status" value="4"/>
</dbReference>
<dbReference type="SMART" id="SM00235">
    <property type="entry name" value="ZnMc"/>
    <property type="match status" value="1"/>
</dbReference>
<dbReference type="SUPFAM" id="SSF50923">
    <property type="entry name" value="Hemopexin-like domain"/>
    <property type="match status" value="1"/>
</dbReference>
<dbReference type="SUPFAM" id="SSF55486">
    <property type="entry name" value="Metalloproteases ('zincins'), catalytic domain"/>
    <property type="match status" value="1"/>
</dbReference>
<dbReference type="SUPFAM" id="SSF47090">
    <property type="entry name" value="PGBD-like"/>
    <property type="match status" value="1"/>
</dbReference>
<dbReference type="PROSITE" id="PS00546">
    <property type="entry name" value="CYSTEINE_SWITCH"/>
    <property type="match status" value="1"/>
</dbReference>
<dbReference type="PROSITE" id="PS51642">
    <property type="entry name" value="HEMOPEXIN_2"/>
    <property type="match status" value="3"/>
</dbReference>
<dbReference type="PROSITE" id="PS00142">
    <property type="entry name" value="ZINC_PROTEASE"/>
    <property type="match status" value="1"/>
</dbReference>
<accession>G5EGM1</accession>
<organism evidence="16">
    <name type="scientific">Caenorhabditis elegans</name>
    <dbReference type="NCBI Taxonomy" id="6239"/>
    <lineage>
        <taxon>Eukaryota</taxon>
        <taxon>Metazoa</taxon>
        <taxon>Ecdysozoa</taxon>
        <taxon>Nematoda</taxon>
        <taxon>Chromadorea</taxon>
        <taxon>Rhabditida</taxon>
        <taxon>Rhabditina</taxon>
        <taxon>Rhabditomorpha</taxon>
        <taxon>Rhabditoidea</taxon>
        <taxon>Rhabditidae</taxon>
        <taxon>Peloderinae</taxon>
        <taxon>Caenorhabditis</taxon>
    </lineage>
</organism>
<reference evidence="16" key="1">
    <citation type="journal article" date="1998" name="Gene">
        <title>Cloning of three Caenorhabditis elegans genes potentially encoding novel matrix metalloproteinases.</title>
        <authorList>
            <person name="Wada K."/>
            <person name="Sato H."/>
            <person name="Kinoh H."/>
            <person name="Kajita M."/>
            <person name="Yamamoto H."/>
            <person name="Seiki M."/>
        </authorList>
    </citation>
    <scope>NUCLEOTIDE SEQUENCE [MRNA]</scope>
    <scope>CATALYTIC ACTIVITY</scope>
    <source>
        <strain evidence="16">Bristol N2</strain>
    </source>
</reference>
<reference evidence="17" key="2">
    <citation type="journal article" date="1998" name="Science">
        <title>Genome sequence of the nematode C. elegans: a platform for investigating biology.</title>
        <authorList>
            <consortium name="The C. elegans sequencing consortium"/>
        </authorList>
    </citation>
    <scope>NUCLEOTIDE SEQUENCE [LARGE SCALE GENOMIC DNA]</scope>
    <source>
        <strain evidence="17">Bristol N2</strain>
    </source>
</reference>
<reference evidence="14" key="3">
    <citation type="journal article" date="2000" name="Development">
        <title>Patterning of the C. elegans 1 degrees vulval lineage by RAS and Wnt pathways.</title>
        <authorList>
            <person name="Wang M."/>
            <person name="Sternberg P.W."/>
        </authorList>
    </citation>
    <scope>TISSUE SPECIFICITY</scope>
</reference>
<reference evidence="14" key="4">
    <citation type="journal article" date="2005" name="Cell">
        <title>FOS-1 promotes basement-membrane removal during anchor-cell invasion in C. elegans.</title>
        <authorList>
            <person name="Sherwood D.R."/>
            <person name="Butler J.A."/>
            <person name="Kramer J.M."/>
            <person name="Sternberg P.W."/>
        </authorList>
    </citation>
    <scope>FUNCTION</scope>
    <scope>SUBCELLULAR LOCATION</scope>
    <scope>TISSUE SPECIFICITY</scope>
    <scope>DISRUPTION PHENOTYPE</scope>
</reference>
<reference evidence="14" key="5">
    <citation type="journal article" date="2009" name="Development">
        <title>The C. elegans tailless/Tlx homolog nhr-67 regulates a stage-specific program of linker cell migration in male gonadogenesis.</title>
        <authorList>
            <person name="Kato M."/>
            <person name="Sternberg P.W."/>
        </authorList>
    </citation>
    <scope>TISSUE SPECIFICITY</scope>
</reference>
<keyword id="KW-1003">Cell membrane</keyword>
<keyword id="KW-0165">Cleavage on pair of basic residues</keyword>
<keyword id="KW-0325">Glycoprotein</keyword>
<keyword id="KW-0378">Hydrolase</keyword>
<keyword id="KW-0472">Membrane</keyword>
<keyword id="KW-0479">Metal-binding</keyword>
<keyword id="KW-0482">Metalloprotease</keyword>
<keyword id="KW-0645">Protease</keyword>
<keyword id="KW-1185">Reference proteome</keyword>
<keyword id="KW-0677">Repeat</keyword>
<keyword id="KW-0732">Signal</keyword>
<keyword id="KW-0812">Transmembrane</keyword>
<keyword id="KW-1133">Transmembrane helix</keyword>
<keyword id="KW-0862">Zinc</keyword>
<keyword id="KW-0865">Zymogen</keyword>
<gene>
    <name evidence="18" type="primary">zmp-1</name>
    <name evidence="18" type="ORF">EGAP1.3</name>
</gene>
<protein>
    <recommendedName>
        <fullName evidence="15">Matrix metalloproteinase-A</fullName>
        <shortName evidence="15">MMP-A</shortName>
        <shortName evidence="13">MMP-Y19</shortName>
        <ecNumber evidence="12">3.4.24.-</ecNumber>
    </recommendedName>
    <alternativeName>
        <fullName evidence="18">Zinc metalloprotease 1</fullName>
    </alternativeName>
</protein>
<evidence type="ECO:0000250" key="1">
    <source>
        <dbReference type="UniProtKB" id="O60882"/>
    </source>
</evidence>
<evidence type="ECO:0000250" key="2">
    <source>
        <dbReference type="UniProtKB" id="P03956"/>
    </source>
</evidence>
<evidence type="ECO:0000250" key="3">
    <source>
        <dbReference type="UniProtKB" id="P09238"/>
    </source>
</evidence>
<evidence type="ECO:0000250" key="4">
    <source>
        <dbReference type="UniProtKB" id="P50281"/>
    </source>
</evidence>
<evidence type="ECO:0000255" key="5"/>
<evidence type="ECO:0000255" key="6">
    <source>
        <dbReference type="PROSITE-ProRule" id="PRU00498"/>
    </source>
</evidence>
<evidence type="ECO:0000255" key="7">
    <source>
        <dbReference type="PROSITE-ProRule" id="PRU01011"/>
    </source>
</evidence>
<evidence type="ECO:0000256" key="8">
    <source>
        <dbReference type="SAM" id="MobiDB-lite"/>
    </source>
</evidence>
<evidence type="ECO:0000269" key="9">
    <source>
    </source>
</evidence>
<evidence type="ECO:0000269" key="10">
    <source>
    </source>
</evidence>
<evidence type="ECO:0000269" key="11">
    <source>
    </source>
</evidence>
<evidence type="ECO:0000269" key="12">
    <source>
    </source>
</evidence>
<evidence type="ECO:0000303" key="13">
    <source>
    </source>
</evidence>
<evidence type="ECO:0000305" key="14"/>
<evidence type="ECO:0000305" key="15">
    <source>
    </source>
</evidence>
<evidence type="ECO:0000312" key="16">
    <source>
        <dbReference type="EMBL" id="BAA28353.1"/>
    </source>
</evidence>
<evidence type="ECO:0000312" key="17">
    <source>
        <dbReference type="Proteomes" id="UP000001940"/>
    </source>
</evidence>
<evidence type="ECO:0000312" key="18">
    <source>
        <dbReference type="WormBase" id="EGAP1.3"/>
    </source>
</evidence>
<sequence length="521" mass="60700">MFTGLHDILIILFLLVTLKIAQNVDHTKFLQKYGYLTSGDNQLSSESLSDALKNMQRMAGLEETGELDERTIQMMERPRCGHPDVEDHQKSRGKRYAPPQFKWKEKIITYGCKAVGTSTRISLDDLRRTMHQAASQWSELADVEIVESSVKNPMMVISAGRENHYPCTVRFDTKTLAHAFFPTNGQIHINDRVQFAMTNYTERMGANSLYSVVAHEMGHALGFSHSPDIDSVMFAYDTPRKWKFTSMDKYNMRSYYGAKASKKENEEEERKTENEDKRRKTEKDRGRTREHESDDIRPNECRVENPIVVQYRGEYLIFKSQWVWRVSSDWKRLIIKAVPINQLFPGLPNPIDAAVTVGHNLWVFVGEMIYVIYGNHMVHAPLRLSDIGINEKYVDLAYEWHYFNPPAVYIWKGSRYWKLDEKMYHRRVDERYPKDTDLNWARVPKGVHSAFTYEKEIHLLRGNQVFRMNSSRSVFDIADGYPQPLQSFFGFCPRNEKLVLNSSSSHFSLIYATITILILIF</sequence>
<proteinExistence type="evidence at protein level"/>